<comment type="similarity">
    <text evidence="1">Belongs to the UPF0125 (RnfH) family.</text>
</comment>
<gene>
    <name evidence="1" type="primary">rnfH</name>
    <name type="ordered locus">SG1802</name>
</gene>
<proteinExistence type="inferred from homology"/>
<reference key="1">
    <citation type="journal article" date="2006" name="Genome Res.">
        <title>Massive genome erosion and functional adaptations provide insights into the symbiotic lifestyle of Sodalis glossinidius in the tsetse host.</title>
        <authorList>
            <person name="Toh H."/>
            <person name="Weiss B.L."/>
            <person name="Perkin S.A.H."/>
            <person name="Yamashita A."/>
            <person name="Oshima K."/>
            <person name="Hattori M."/>
            <person name="Aksoy S."/>
        </authorList>
    </citation>
    <scope>NUCLEOTIDE SEQUENCE [LARGE SCALE GENOMIC DNA]</scope>
    <source>
        <strain>morsitans</strain>
    </source>
</reference>
<accession>Q2NRZ8</accession>
<sequence length="94" mass="10854">MPDIRVEVVYALPERQYLRQLVLEEGSTLEQAIHASGLLALRQDIDLSVNKVGIFSRPAKLEDTLSDGDRVEIYRPLLIDPKELRRQRADRTRK</sequence>
<name>RNFH_SODGM</name>
<organism>
    <name type="scientific">Sodalis glossinidius (strain morsitans)</name>
    <dbReference type="NCBI Taxonomy" id="343509"/>
    <lineage>
        <taxon>Bacteria</taxon>
        <taxon>Pseudomonadati</taxon>
        <taxon>Pseudomonadota</taxon>
        <taxon>Gammaproteobacteria</taxon>
        <taxon>Enterobacterales</taxon>
        <taxon>Bruguierivoracaceae</taxon>
        <taxon>Sodalis</taxon>
    </lineage>
</organism>
<protein>
    <recommendedName>
        <fullName evidence="1">Protein RnfH</fullName>
    </recommendedName>
</protein>
<feature type="chain" id="PRO_1000013596" description="Protein RnfH">
    <location>
        <begin position="1"/>
        <end position="94"/>
    </location>
</feature>
<dbReference type="EMBL" id="AP008232">
    <property type="protein sequence ID" value="BAE75077.1"/>
    <property type="molecule type" value="Genomic_DNA"/>
</dbReference>
<dbReference type="RefSeq" id="WP_011411626.1">
    <property type="nucleotide sequence ID" value="NC_007712.1"/>
</dbReference>
<dbReference type="SMR" id="Q2NRZ8"/>
<dbReference type="STRING" id="343509.SG1802"/>
<dbReference type="KEGG" id="sgl:SG1802"/>
<dbReference type="eggNOG" id="COG2914">
    <property type="taxonomic scope" value="Bacteria"/>
</dbReference>
<dbReference type="HOGENOM" id="CLU_150721_1_0_6"/>
<dbReference type="OrthoDB" id="9796575at2"/>
<dbReference type="BioCyc" id="SGLO343509:SGP1_RS16300-MONOMER"/>
<dbReference type="Proteomes" id="UP000001932">
    <property type="component" value="Chromosome"/>
</dbReference>
<dbReference type="Gene3D" id="3.10.20.280">
    <property type="entry name" value="RnfH-like"/>
    <property type="match status" value="1"/>
</dbReference>
<dbReference type="HAMAP" id="MF_00460">
    <property type="entry name" value="UPF0125_RnfH"/>
    <property type="match status" value="1"/>
</dbReference>
<dbReference type="InterPro" id="IPR016155">
    <property type="entry name" value="Mopterin_synth/thiamin_S_b"/>
</dbReference>
<dbReference type="InterPro" id="IPR005346">
    <property type="entry name" value="RnfH"/>
</dbReference>
<dbReference type="InterPro" id="IPR037021">
    <property type="entry name" value="RnfH_sf"/>
</dbReference>
<dbReference type="NCBIfam" id="NF002490">
    <property type="entry name" value="PRK01777.1"/>
    <property type="match status" value="1"/>
</dbReference>
<dbReference type="PANTHER" id="PTHR37483">
    <property type="entry name" value="UPF0125 PROTEIN RATB"/>
    <property type="match status" value="1"/>
</dbReference>
<dbReference type="PANTHER" id="PTHR37483:SF1">
    <property type="entry name" value="UPF0125 PROTEIN RATB"/>
    <property type="match status" value="1"/>
</dbReference>
<dbReference type="Pfam" id="PF03658">
    <property type="entry name" value="Ub-RnfH"/>
    <property type="match status" value="1"/>
</dbReference>
<dbReference type="SUPFAM" id="SSF54285">
    <property type="entry name" value="MoaD/ThiS"/>
    <property type="match status" value="1"/>
</dbReference>
<evidence type="ECO:0000255" key="1">
    <source>
        <dbReference type="HAMAP-Rule" id="MF_00460"/>
    </source>
</evidence>